<sequence length="408" mass="46031">MGLRRGPCPAALLPGGFLFLLLLADPALLAGRRPPVVLVPGDLGNQLEAKLDKPTVVHYLCSKRTESYFTLWLNLELLLPVIIDCWIDNIRLVYNRTSRATQFPDGVDVRVPGFGKTFSLEFLDPSKSSVGSYFHTMVESLVDWGYIRGEDVRGAPYDWRRAPNENGPYFLALREMIEEMYQLYGGPVVLVAHSMGNMYTLYFLQRQPQAWKNKYIQAFVALGAPWGGVAKTLRVLASGDNNRIPVIRPLKIREQQRSAVSTSWLLPYNYTWSPEKIFVHTPTANYTLRDYHQFFQDIGFKDGWLMRQDTEGLVEAMVPPGVPLHCLYGTGVPTPDSFYYESFPDRDPKICFGDGDGTVNLQSALQCQAWRGHQEHQVSLQALPGSEHIEMLANATTLAYLKRVLLGP</sequence>
<evidence type="ECO:0000250" key="1">
    <source>
        <dbReference type="UniProtKB" id="Q675A5"/>
    </source>
</evidence>
<evidence type="ECO:0000250" key="2">
    <source>
        <dbReference type="UniProtKB" id="Q8NCC3"/>
    </source>
</evidence>
<evidence type="ECO:0000250" key="3">
    <source>
        <dbReference type="UniProtKB" id="Q8VEB4"/>
    </source>
</evidence>
<evidence type="ECO:0000250" key="4">
    <source>
        <dbReference type="UniProtKB" id="Q8WMP9"/>
    </source>
</evidence>
<evidence type="ECO:0000255" key="5"/>
<evidence type="ECO:0000269" key="6">
    <source>
    </source>
</evidence>
<evidence type="ECO:0000303" key="7">
    <source>
    </source>
</evidence>
<accession>Q6XPZ3</accession>
<protein>
    <recommendedName>
        <fullName>Lysosomal phospholipase A and acyltransferase</fullName>
        <ecNumber evidence="6">2.3.1.-</ecNumber>
        <ecNumber evidence="3">3.1.1.32</ecNumber>
        <ecNumber evidence="3">3.1.1.4</ecNumber>
    </recommendedName>
    <alternativeName>
        <fullName evidence="7">1-O-acylceramide synthase</fullName>
        <shortName evidence="7">ACS</shortName>
    </alternativeName>
    <alternativeName>
        <fullName evidence="7">LCAT-like lysophospholipase</fullName>
        <shortName evidence="7">LLPL</shortName>
        <ecNumber evidence="2">3.1.1.5</ecNumber>
    </alternativeName>
    <alternativeName>
        <fullName>Lysophospholipase 3</fullName>
    </alternativeName>
    <alternativeName>
        <fullName evidence="7">Lysosomal phospholipase A2</fullName>
        <shortName evidence="3">LPLA2</shortName>
    </alternativeName>
    <alternativeName>
        <fullName evidence="3">Phospholipase A2 group XV</fullName>
    </alternativeName>
</protein>
<gene>
    <name type="primary">PLA2G15</name>
    <name type="synonym">LYPLA3</name>
</gene>
<feature type="signal peptide" evidence="2">
    <location>
        <begin position="1"/>
        <end position="31"/>
    </location>
</feature>
<feature type="chain" id="PRO_0000413419" description="Lysosomal phospholipase A and acyltransferase" evidence="2">
    <location>
        <begin position="32"/>
        <end position="408"/>
    </location>
</feature>
<feature type="active site" description="Acyl-ester intermediate" evidence="2 5">
    <location>
        <position position="194"/>
    </location>
</feature>
<feature type="active site" description="Charge relay system" evidence="2">
    <location>
        <position position="356"/>
    </location>
</feature>
<feature type="active site" description="Charge relay system" evidence="2">
    <location>
        <position position="388"/>
    </location>
</feature>
<feature type="binding site" evidence="2">
    <location>
        <position position="42"/>
    </location>
    <ligand>
        <name>substrate</name>
    </ligand>
</feature>
<feature type="binding site" evidence="2">
    <location>
        <position position="194"/>
    </location>
    <ligand>
        <name>Zn(2+)</name>
        <dbReference type="ChEBI" id="CHEBI:29105"/>
    </ligand>
</feature>
<feature type="binding site" evidence="2">
    <location>
        <position position="195"/>
    </location>
    <ligand>
        <name>substrate</name>
    </ligand>
</feature>
<feature type="binding site" evidence="2">
    <location>
        <position position="336"/>
    </location>
    <ligand>
        <name>Zn(2+)</name>
        <dbReference type="ChEBI" id="CHEBI:29105"/>
    </ligand>
</feature>
<feature type="binding site" evidence="2">
    <location>
        <position position="351"/>
    </location>
    <ligand>
        <name>Zn(2+)</name>
        <dbReference type="ChEBI" id="CHEBI:29105"/>
    </ligand>
</feature>
<feature type="binding site" evidence="2">
    <location>
        <position position="388"/>
    </location>
    <ligand>
        <name>Zn(2+)</name>
        <dbReference type="ChEBI" id="CHEBI:29105"/>
    </ligand>
</feature>
<feature type="glycosylation site" description="N-linked (GlcNAc...) asparagine" evidence="5">
    <location>
        <position position="95"/>
    </location>
</feature>
<feature type="glycosylation site" description="N-linked (GlcNAc...) asparagine" evidence="5">
    <location>
        <position position="269"/>
    </location>
</feature>
<feature type="glycosylation site" description="N-linked (GlcNAc...) asparagine" evidence="5">
    <location>
        <position position="285"/>
    </location>
</feature>
<feature type="glycosylation site" description="N-linked (GlcNAc...) asparagine" evidence="5">
    <location>
        <position position="394"/>
    </location>
</feature>
<feature type="disulfide bond" evidence="2">
    <location>
        <begin position="61"/>
        <end position="85"/>
    </location>
</feature>
<reference key="1">
    <citation type="journal article" date="2002" name="J. Biol. Chem.">
        <title>Cloning and characterization of a lysosomal phospholipase A2, 1-O-acylceramide synthase.</title>
        <authorList>
            <person name="Hiraoka M."/>
            <person name="Abe A."/>
            <person name="Shayman J.A."/>
        </authorList>
    </citation>
    <scope>NUCLEOTIDE SEQUENCE [MRNA]</scope>
    <scope>SUBCELLULAR LOCATION</scope>
    <scope>FUNCTION</scope>
    <scope>CATALYTIC ACTIVITY</scope>
</reference>
<keyword id="KW-0012">Acyltransferase</keyword>
<keyword id="KW-1015">Disulfide bond</keyword>
<keyword id="KW-0276">Fatty acid metabolism</keyword>
<keyword id="KW-0325">Glycoprotein</keyword>
<keyword id="KW-0378">Hydrolase</keyword>
<keyword id="KW-0443">Lipid metabolism</keyword>
<keyword id="KW-0458">Lysosome</keyword>
<keyword id="KW-0472">Membrane</keyword>
<keyword id="KW-0479">Metal-binding</keyword>
<keyword id="KW-1185">Reference proteome</keyword>
<keyword id="KW-0964">Secreted</keyword>
<keyword id="KW-0732">Signal</keyword>
<keyword id="KW-0808">Transferase</keyword>
<keyword id="KW-0862">Zinc</keyword>
<dbReference type="EC" id="2.3.1.-" evidence="6"/>
<dbReference type="EC" id="3.1.1.32" evidence="3"/>
<dbReference type="EC" id="3.1.1.4" evidence="3"/>
<dbReference type="EC" id="3.1.1.5" evidence="2"/>
<dbReference type="EMBL" id="AY217754">
    <property type="protein sequence ID" value="AAO91807.1"/>
    <property type="molecule type" value="mRNA"/>
</dbReference>
<dbReference type="RefSeq" id="NP_001002940.1">
    <property type="nucleotide sequence ID" value="NM_001002940.1"/>
</dbReference>
<dbReference type="SMR" id="Q6XPZ3"/>
<dbReference type="FunCoup" id="Q6XPZ3">
    <property type="interactions" value="445"/>
</dbReference>
<dbReference type="STRING" id="9615.ENSCAFP00000030134"/>
<dbReference type="ESTHER" id="canfa-q6xpz3">
    <property type="family name" value="PC-sterol_acyltransferase"/>
</dbReference>
<dbReference type="GlyCosmos" id="Q6XPZ3">
    <property type="glycosylation" value="4 sites, No reported glycans"/>
</dbReference>
<dbReference type="PaxDb" id="9612-ENSCAFP00000030134"/>
<dbReference type="Ensembl" id="ENSCAFT00000032360.4">
    <property type="protein sequence ID" value="ENSCAFP00000030134.2"/>
    <property type="gene ID" value="ENSCAFG00000020324.6"/>
</dbReference>
<dbReference type="Ensembl" id="ENSCAFT00030027995.1">
    <property type="protein sequence ID" value="ENSCAFP00030024434.1"/>
    <property type="gene ID" value="ENSCAFG00030015158.1"/>
</dbReference>
<dbReference type="Ensembl" id="ENSCAFT00040022114.1">
    <property type="protein sequence ID" value="ENSCAFP00040019185.1"/>
    <property type="gene ID" value="ENSCAFG00040011998.1"/>
</dbReference>
<dbReference type="Ensembl" id="ENSCAFT00845020534.1">
    <property type="protein sequence ID" value="ENSCAFP00845016103.1"/>
    <property type="gene ID" value="ENSCAFG00845011578.1"/>
</dbReference>
<dbReference type="GeneID" id="403403"/>
<dbReference type="KEGG" id="cfa:403403"/>
<dbReference type="CTD" id="23659"/>
<dbReference type="VEuPathDB" id="HostDB:ENSCAFG00845011578"/>
<dbReference type="VGNC" id="VGNC:43769">
    <property type="gene designation" value="NFATC3"/>
</dbReference>
<dbReference type="eggNOG" id="KOG2369">
    <property type="taxonomic scope" value="Eukaryota"/>
</dbReference>
<dbReference type="GeneTree" id="ENSGT00940000157499"/>
<dbReference type="HOGENOM" id="CLU_037070_1_1_1"/>
<dbReference type="InParanoid" id="Q6XPZ3"/>
<dbReference type="OMA" id="QMTPPGV"/>
<dbReference type="OrthoDB" id="190846at2759"/>
<dbReference type="TreeFam" id="TF313258"/>
<dbReference type="Reactome" id="R-CFA-1483115">
    <property type="pathway name" value="Hydrolysis of LPC"/>
</dbReference>
<dbReference type="Proteomes" id="UP000002254">
    <property type="component" value="Chromosome 5"/>
</dbReference>
<dbReference type="Proteomes" id="UP000694429">
    <property type="component" value="Chromosome 5"/>
</dbReference>
<dbReference type="Proteomes" id="UP000694542">
    <property type="component" value="Chromosome 5"/>
</dbReference>
<dbReference type="Proteomes" id="UP000805418">
    <property type="component" value="Chromosome 5"/>
</dbReference>
<dbReference type="Bgee" id="ENSCAFG00000020318">
    <property type="expression patterns" value="Expressed in placenta and 49 other cell types or tissues"/>
</dbReference>
<dbReference type="GO" id="GO:0005615">
    <property type="term" value="C:extracellular space"/>
    <property type="evidence" value="ECO:0000250"/>
    <property type="project" value="UniProtKB"/>
</dbReference>
<dbReference type="GO" id="GO:0005764">
    <property type="term" value="C:lysosome"/>
    <property type="evidence" value="ECO:0000314"/>
    <property type="project" value="UniProtKB"/>
</dbReference>
<dbReference type="GO" id="GO:0016020">
    <property type="term" value="C:membrane"/>
    <property type="evidence" value="ECO:0007669"/>
    <property type="project" value="UniProtKB-SubCell"/>
</dbReference>
<dbReference type="GO" id="GO:0005654">
    <property type="term" value="C:nucleoplasm"/>
    <property type="evidence" value="ECO:0007669"/>
    <property type="project" value="Ensembl"/>
</dbReference>
<dbReference type="GO" id="GO:0016411">
    <property type="term" value="F:acylglycerol O-acyltransferase activity"/>
    <property type="evidence" value="ECO:0000250"/>
    <property type="project" value="UniProtKB"/>
</dbReference>
<dbReference type="GO" id="GO:0047499">
    <property type="term" value="F:calcium-independent phospholipase A2 activity"/>
    <property type="evidence" value="ECO:0000250"/>
    <property type="project" value="UniProtKB"/>
</dbReference>
<dbReference type="GO" id="GO:0004622">
    <property type="term" value="F:lysophospholipase activity"/>
    <property type="evidence" value="ECO:0007669"/>
    <property type="project" value="UniProtKB-EC"/>
</dbReference>
<dbReference type="GO" id="GO:0008374">
    <property type="term" value="F:O-acyltransferase activity"/>
    <property type="evidence" value="ECO:0000250"/>
    <property type="project" value="UniProtKB"/>
</dbReference>
<dbReference type="GO" id="GO:0008970">
    <property type="term" value="F:phospholipase A1 activity"/>
    <property type="evidence" value="ECO:0000250"/>
    <property type="project" value="UniProtKB"/>
</dbReference>
<dbReference type="GO" id="GO:0008270">
    <property type="term" value="F:zinc ion binding"/>
    <property type="evidence" value="ECO:0000250"/>
    <property type="project" value="UniProtKB"/>
</dbReference>
<dbReference type="GO" id="GO:0006672">
    <property type="term" value="P:ceramide metabolic process"/>
    <property type="evidence" value="ECO:0000250"/>
    <property type="project" value="UniProtKB"/>
</dbReference>
<dbReference type="GO" id="GO:0006651">
    <property type="term" value="P:diacylglycerol biosynthetic process"/>
    <property type="evidence" value="ECO:0000250"/>
    <property type="project" value="UniProtKB"/>
</dbReference>
<dbReference type="GO" id="GO:0006631">
    <property type="term" value="P:fatty acid metabolic process"/>
    <property type="evidence" value="ECO:0007669"/>
    <property type="project" value="UniProtKB-KW"/>
</dbReference>
<dbReference type="GO" id="GO:0006650">
    <property type="term" value="P:glycerophospholipid metabolic process"/>
    <property type="evidence" value="ECO:0000250"/>
    <property type="project" value="UniProtKB"/>
</dbReference>
<dbReference type="GO" id="GO:0034638">
    <property type="term" value="P:phosphatidylcholine catabolic process"/>
    <property type="evidence" value="ECO:0000250"/>
    <property type="project" value="UniProtKB"/>
</dbReference>
<dbReference type="GO" id="GO:0046470">
    <property type="term" value="P:phosphatidylcholine metabolic process"/>
    <property type="evidence" value="ECO:0000250"/>
    <property type="project" value="UniProtKB"/>
</dbReference>
<dbReference type="GO" id="GO:0046338">
    <property type="term" value="P:phosphatidylethanolamine catabolic process"/>
    <property type="evidence" value="ECO:0000250"/>
    <property type="project" value="UniProtKB"/>
</dbReference>
<dbReference type="GO" id="GO:0046471">
    <property type="term" value="P:phosphatidylglycerol metabolic process"/>
    <property type="evidence" value="ECO:0000250"/>
    <property type="project" value="UniProtKB"/>
</dbReference>
<dbReference type="GO" id="GO:0006658">
    <property type="term" value="P:phosphatidylserine metabolic process"/>
    <property type="evidence" value="ECO:0000250"/>
    <property type="project" value="UniProtKB"/>
</dbReference>
<dbReference type="FunFam" id="3.40.50.1820:FF:000221">
    <property type="entry name" value="Group XV phospholipase A2"/>
    <property type="match status" value="1"/>
</dbReference>
<dbReference type="FunFam" id="3.40.50.1820:FF:000166">
    <property type="entry name" value="group XV phospholipase A2 isoform X1"/>
    <property type="match status" value="1"/>
</dbReference>
<dbReference type="Gene3D" id="3.40.50.1820">
    <property type="entry name" value="alpha/beta hydrolase"/>
    <property type="match status" value="2"/>
</dbReference>
<dbReference type="InterPro" id="IPR029058">
    <property type="entry name" value="AB_hydrolase_fold"/>
</dbReference>
<dbReference type="InterPro" id="IPR003386">
    <property type="entry name" value="LACT/PDAT_acylTrfase"/>
</dbReference>
<dbReference type="PANTHER" id="PTHR11440">
    <property type="entry name" value="LECITHIN-CHOLESTEROL ACYLTRANSFERASE-RELATED"/>
    <property type="match status" value="1"/>
</dbReference>
<dbReference type="Pfam" id="PF02450">
    <property type="entry name" value="LCAT"/>
    <property type="match status" value="2"/>
</dbReference>
<dbReference type="SUPFAM" id="SSF53474">
    <property type="entry name" value="alpha/beta-Hydrolases"/>
    <property type="match status" value="1"/>
</dbReference>
<organism>
    <name type="scientific">Canis lupus familiaris</name>
    <name type="common">Dog</name>
    <name type="synonym">Canis familiaris</name>
    <dbReference type="NCBI Taxonomy" id="9615"/>
    <lineage>
        <taxon>Eukaryota</taxon>
        <taxon>Metazoa</taxon>
        <taxon>Chordata</taxon>
        <taxon>Craniata</taxon>
        <taxon>Vertebrata</taxon>
        <taxon>Euteleostomi</taxon>
        <taxon>Mammalia</taxon>
        <taxon>Eutheria</taxon>
        <taxon>Laurasiatheria</taxon>
        <taxon>Carnivora</taxon>
        <taxon>Caniformia</taxon>
        <taxon>Canidae</taxon>
        <taxon>Canis</taxon>
    </lineage>
</organism>
<proteinExistence type="evidence at protein level"/>
<name>PAG15_CANLF</name>
<comment type="function">
    <text evidence="2 3 6">Has dual calcium-independent phospholipase and O-acyltransferase activities with a potential role in glycerophospholipid homeostasis and remodeling of acyl groups of lipophilic alcohols present in acidic cellular compartments (PubMed:11790796). Catalyzes hydrolysis of the ester bond of the fatty acyl group attached at sn-1 or sn-2 position of phospholipids (phospholipase A1 or A2 activity) and transfer it to the hydroxyl group at the first carbon of lipophilic alcohols (O-acyltransferase activity) (PubMed:11790796). Among preferred fatty acyl donors are phosphatidylcholines, phosphatidylethanolamines, phosphatidylglycerols and phosphatidylserines. Favors sn-2 over sn-1 deacylation of unsaturated fatty acyl groups of phosphatidylcholines, phosphatidylethanolamines, and phosphatidylglycerols (By similarity). Among preferred fatty acyl acceptors are natural lipophilic alcohols including short-chain ceramide N-acetyl-sphingosine (C2 ceramide), alkylacylglycerols, monoacylglycerols, and acylethanolamides such as anandamide and oleoylethanolamide. Selectively hydrolyzes the sn-1 fatty acyl group of truncated oxidized phospholipids and may play a role in detoxification of reactive oxidized phospholipids during oxidative stress (By similarity). Required for normal phospholipid degradation in alveolar macrophages with potential implications in the clearance of pulmonary surfactant, which is mainly composed of dipalmitoylphosphatidylcholine (1,2-dihexadecanoyl-sn-glycero-3-phosphocholine) (By similarity). Involved in the first step of bis(monoacylglycero)phosphate (BMP) de novo synthesis from phosphatidylglycerol (1,2-diacyl-sn-glycero-3-phospho-(1'-sn-glycerol), PG) (By similarity). BMP is an important player in cargo sorting and degradation, regulation of cellular cholesterol levels and intercellular communication. At neutral pH, hydrolyzes the sn-1 fatty acyl group of the lysophosphatidylcholines (By similarity).</text>
</comment>
<comment type="catalytic activity">
    <reaction evidence="3">
        <text>a 1,2-diacyl-sn-glycero-3-phosphocholine + H2O = a 2-acyl-sn-glycero-3-phosphocholine + a fatty acid + H(+)</text>
        <dbReference type="Rhea" id="RHEA:18689"/>
        <dbReference type="ChEBI" id="CHEBI:15377"/>
        <dbReference type="ChEBI" id="CHEBI:15378"/>
        <dbReference type="ChEBI" id="CHEBI:28868"/>
        <dbReference type="ChEBI" id="CHEBI:57643"/>
        <dbReference type="ChEBI" id="CHEBI:57875"/>
        <dbReference type="EC" id="3.1.1.32"/>
    </reaction>
    <physiologicalReaction direction="left-to-right" evidence="3">
        <dbReference type="Rhea" id="RHEA:18690"/>
    </physiologicalReaction>
</comment>
<comment type="catalytic activity">
    <reaction evidence="3">
        <text>1-hexadecanoyl-2-(9Z-octadecenoyl)-sn-glycero-3-phosphocholine + H2O = 2-(9Z-octadecenoyl)-sn-glycero-3-phosphocholine + hexadecanoate + H(+)</text>
        <dbReference type="Rhea" id="RHEA:38783"/>
        <dbReference type="ChEBI" id="CHEBI:7896"/>
        <dbReference type="ChEBI" id="CHEBI:15377"/>
        <dbReference type="ChEBI" id="CHEBI:15378"/>
        <dbReference type="ChEBI" id="CHEBI:73001"/>
        <dbReference type="ChEBI" id="CHEBI:76071"/>
    </reaction>
    <physiologicalReaction direction="left-to-right" evidence="3">
        <dbReference type="Rhea" id="RHEA:38784"/>
    </physiologicalReaction>
</comment>
<comment type="catalytic activity">
    <reaction evidence="3">
        <text>1,2-di-(9Z-octadecenoyl)-sn-glycero-3-phosphocholine + H2O = 2-(9Z-octadecenoyl)-sn-glycero-3-phosphocholine + (9Z)-octadecenoate + H(+)</text>
        <dbReference type="Rhea" id="RHEA:56448"/>
        <dbReference type="ChEBI" id="CHEBI:15377"/>
        <dbReference type="ChEBI" id="CHEBI:15378"/>
        <dbReference type="ChEBI" id="CHEBI:30823"/>
        <dbReference type="ChEBI" id="CHEBI:74669"/>
        <dbReference type="ChEBI" id="CHEBI:76071"/>
    </reaction>
    <physiologicalReaction direction="left-to-right" evidence="3">
        <dbReference type="Rhea" id="RHEA:56449"/>
    </physiologicalReaction>
</comment>
<comment type="catalytic activity">
    <reaction evidence="3">
        <text>1-hexadecanoyl-2-glutaroyl-sn-glycero-3-phosphocholine + H2O = 2-glutaroyl-sn-glycero-3-phosphocholine + hexadecanoate + H(+)</text>
        <dbReference type="Rhea" id="RHEA:62480"/>
        <dbReference type="ChEBI" id="CHEBI:7896"/>
        <dbReference type="ChEBI" id="CHEBI:15377"/>
        <dbReference type="ChEBI" id="CHEBI:15378"/>
        <dbReference type="ChEBI" id="CHEBI:77756"/>
        <dbReference type="ChEBI" id="CHEBI:145781"/>
    </reaction>
    <physiologicalReaction direction="left-to-right" evidence="3">
        <dbReference type="Rhea" id="RHEA:62481"/>
    </physiologicalReaction>
</comment>
<comment type="catalytic activity">
    <reaction evidence="3">
        <text>1-hexadecanoyl-2-nonadioyl-sn-glycero-3-phosphocholine + H2O = 2-nonadioyl-sn-glycero-3-phosphocholine + hexadecanoate + H(+)</text>
        <dbReference type="Rhea" id="RHEA:62464"/>
        <dbReference type="ChEBI" id="CHEBI:7896"/>
        <dbReference type="ChEBI" id="CHEBI:15377"/>
        <dbReference type="ChEBI" id="CHEBI:15378"/>
        <dbReference type="ChEBI" id="CHEBI:78207"/>
        <dbReference type="ChEBI" id="CHEBI:145780"/>
    </reaction>
    <physiologicalReaction direction="left-to-right" evidence="3">
        <dbReference type="Rhea" id="RHEA:62465"/>
    </physiologicalReaction>
</comment>
<comment type="catalytic activity">
    <reaction evidence="3">
        <text>1-hexadecanoyl-2-(5-oxopentanoyl)-sn-glycero-3-phosphocholine + H2O = 2-(5-oxopentanoyl)-sn-glycero-3-phosphocholine + hexadecanoate + H(+)</text>
        <dbReference type="Rhea" id="RHEA:62484"/>
        <dbReference type="ChEBI" id="CHEBI:7896"/>
        <dbReference type="ChEBI" id="CHEBI:15377"/>
        <dbReference type="ChEBI" id="CHEBI:15378"/>
        <dbReference type="ChEBI" id="CHEBI:77890"/>
        <dbReference type="ChEBI" id="CHEBI:145782"/>
    </reaction>
    <physiologicalReaction direction="left-to-right" evidence="3">
        <dbReference type="Rhea" id="RHEA:62485"/>
    </physiologicalReaction>
</comment>
<comment type="catalytic activity">
    <reaction evidence="3">
        <text>1-hexadecanoyl-2-(9-oxononanoyl)-sn-glycero-3-phosphocholine + H2O = 2-(9-oxononanoyl)-sn-glycero-3-phosphocholine + hexadecanoate + H(+)</text>
        <dbReference type="Rhea" id="RHEA:62488"/>
        <dbReference type="ChEBI" id="CHEBI:7896"/>
        <dbReference type="ChEBI" id="CHEBI:15377"/>
        <dbReference type="ChEBI" id="CHEBI:15378"/>
        <dbReference type="ChEBI" id="CHEBI:61042"/>
        <dbReference type="ChEBI" id="CHEBI:145783"/>
    </reaction>
    <physiologicalReaction direction="left-to-right" evidence="3">
        <dbReference type="Rhea" id="RHEA:62489"/>
    </physiologicalReaction>
</comment>
<comment type="catalytic activity">
    <reaction evidence="1">
        <text>1,2-dihexadecanoyl-sn-glycero-3-phosphocholine + H2O = 2-hexadecanoyl-sn-glycero-3-phosphocholine + hexadecanoate + H(+)</text>
        <dbReference type="Rhea" id="RHEA:40487"/>
        <dbReference type="ChEBI" id="CHEBI:7896"/>
        <dbReference type="ChEBI" id="CHEBI:15377"/>
        <dbReference type="ChEBI" id="CHEBI:15378"/>
        <dbReference type="ChEBI" id="CHEBI:72999"/>
        <dbReference type="ChEBI" id="CHEBI:76078"/>
    </reaction>
    <physiologicalReaction direction="left-to-right" evidence="1">
        <dbReference type="Rhea" id="RHEA:40488"/>
    </physiologicalReaction>
</comment>
<comment type="catalytic activity">
    <reaction evidence="3">
        <text>a 1,2-diacyl-sn-glycero-3-phosphocholine + H2O = a 1-acyl-sn-glycero-3-phosphocholine + a fatty acid + H(+)</text>
        <dbReference type="Rhea" id="RHEA:15801"/>
        <dbReference type="ChEBI" id="CHEBI:15377"/>
        <dbReference type="ChEBI" id="CHEBI:15378"/>
        <dbReference type="ChEBI" id="CHEBI:28868"/>
        <dbReference type="ChEBI" id="CHEBI:57643"/>
        <dbReference type="ChEBI" id="CHEBI:58168"/>
        <dbReference type="EC" id="3.1.1.4"/>
    </reaction>
    <physiologicalReaction direction="left-to-right" evidence="3">
        <dbReference type="Rhea" id="RHEA:15802"/>
    </physiologicalReaction>
</comment>
<comment type="catalytic activity">
    <reaction evidence="3">
        <text>1-hexadecanoyl-2-(9Z-octadecenoyl)-sn-glycero-3-phosphocholine + H2O = 1-hexadecanoyl-sn-glycero-3-phosphocholine + (9Z)-octadecenoate + H(+)</text>
        <dbReference type="Rhea" id="RHEA:38779"/>
        <dbReference type="ChEBI" id="CHEBI:15377"/>
        <dbReference type="ChEBI" id="CHEBI:15378"/>
        <dbReference type="ChEBI" id="CHEBI:30823"/>
        <dbReference type="ChEBI" id="CHEBI:72998"/>
        <dbReference type="ChEBI" id="CHEBI:73001"/>
    </reaction>
    <physiologicalReaction direction="left-to-right" evidence="3">
        <dbReference type="Rhea" id="RHEA:38780"/>
    </physiologicalReaction>
</comment>
<comment type="catalytic activity">
    <reaction evidence="3">
        <text>1,2-di-(9Z-octadecenoyl)-sn-glycero-3-phosphocholine + H2O = 1-(9Z-octadecenoyl)-sn-glycero-3-phosphocholine + (9Z)-octadecenoate + H(+)</text>
        <dbReference type="Rhea" id="RHEA:40923"/>
        <dbReference type="ChEBI" id="CHEBI:15377"/>
        <dbReference type="ChEBI" id="CHEBI:15378"/>
        <dbReference type="ChEBI" id="CHEBI:28610"/>
        <dbReference type="ChEBI" id="CHEBI:30823"/>
        <dbReference type="ChEBI" id="CHEBI:74669"/>
    </reaction>
    <physiologicalReaction direction="left-to-right" evidence="3">
        <dbReference type="Rhea" id="RHEA:40924"/>
    </physiologicalReaction>
</comment>
<comment type="catalytic activity">
    <reaction evidence="1">
        <text>1,2-dihexadecanoyl-sn-glycero-3-phosphocholine + H2O = 1-hexadecanoyl-sn-glycero-3-phosphocholine + hexadecanoate + H(+)</text>
        <dbReference type="Rhea" id="RHEA:41223"/>
        <dbReference type="ChEBI" id="CHEBI:7896"/>
        <dbReference type="ChEBI" id="CHEBI:15377"/>
        <dbReference type="ChEBI" id="CHEBI:15378"/>
        <dbReference type="ChEBI" id="CHEBI:72998"/>
        <dbReference type="ChEBI" id="CHEBI:72999"/>
    </reaction>
    <physiologicalReaction direction="left-to-right" evidence="1">
        <dbReference type="Rhea" id="RHEA:41224"/>
    </physiologicalReaction>
</comment>
<comment type="catalytic activity">
    <reaction evidence="2">
        <text>a 1-acyl-sn-glycero-3-phosphocholine + H2O = sn-glycerol 3-phosphocholine + a fatty acid + H(+)</text>
        <dbReference type="Rhea" id="RHEA:15177"/>
        <dbReference type="ChEBI" id="CHEBI:15377"/>
        <dbReference type="ChEBI" id="CHEBI:15378"/>
        <dbReference type="ChEBI" id="CHEBI:16870"/>
        <dbReference type="ChEBI" id="CHEBI:28868"/>
        <dbReference type="ChEBI" id="CHEBI:58168"/>
        <dbReference type="EC" id="3.1.1.5"/>
    </reaction>
    <physiologicalReaction direction="left-to-right" evidence="2">
        <dbReference type="Rhea" id="RHEA:15178"/>
    </physiologicalReaction>
</comment>
<comment type="catalytic activity">
    <reaction evidence="2">
        <text>1-hexadecanoyl-sn-glycero-3-phosphocholine + H2O = sn-glycerol 3-phosphocholine + hexadecanoate + H(+)</text>
        <dbReference type="Rhea" id="RHEA:40435"/>
        <dbReference type="ChEBI" id="CHEBI:7896"/>
        <dbReference type="ChEBI" id="CHEBI:15377"/>
        <dbReference type="ChEBI" id="CHEBI:15378"/>
        <dbReference type="ChEBI" id="CHEBI:16870"/>
        <dbReference type="ChEBI" id="CHEBI:72998"/>
    </reaction>
    <physiologicalReaction direction="left-to-right" evidence="2">
        <dbReference type="Rhea" id="RHEA:40436"/>
    </physiologicalReaction>
</comment>
<comment type="catalytic activity">
    <reaction evidence="3">
        <text>N-(acetyl)-sphing-4-enine + a 1,2-diacyl-sn-glycero-3-phosphoethanolamine = 1-O-acyl-N-(acetyl)-sphing-4-enine + a 2-acyl-sn-glycero-3-phosphoethanolamine</text>
        <dbReference type="Rhea" id="RHEA:44536"/>
        <dbReference type="ChEBI" id="CHEBI:46979"/>
        <dbReference type="ChEBI" id="CHEBI:64612"/>
        <dbReference type="ChEBI" id="CHEBI:65213"/>
        <dbReference type="ChEBI" id="CHEBI:84483"/>
    </reaction>
    <physiologicalReaction direction="left-to-right" evidence="3">
        <dbReference type="Rhea" id="RHEA:44537"/>
    </physiologicalReaction>
</comment>
<comment type="catalytic activity">
    <reaction evidence="3">
        <text>1-hexadecanoyl-2-(9Z-octadecenoyl)-sn-glycero-3-phosphoethanolamine + N-(acetyl)-sphing-4-enine = 2-(9Z-octadecenoyl)-sn-glycero-3-phosphoethanolamine + 1-hexadecanoyl-N-(acetyl)-sphing-4-enine</text>
        <dbReference type="Rhea" id="RHEA:38827"/>
        <dbReference type="ChEBI" id="CHEBI:46979"/>
        <dbReference type="ChEBI" id="CHEBI:73007"/>
        <dbReference type="ChEBI" id="CHEBI:76077"/>
        <dbReference type="ChEBI" id="CHEBI:76088"/>
    </reaction>
    <physiologicalReaction direction="left-to-right" evidence="3">
        <dbReference type="Rhea" id="RHEA:38828"/>
    </physiologicalReaction>
</comment>
<comment type="catalytic activity">
    <reaction evidence="3">
        <text>1-hexadecanoyl-2-(9Z,12Z-octadecadienoyl)-sn-glycero-3-phosphoethanolamine + N-(acetyl)-sphing-4-enine = 2-(9Z,12Z)-octadecadienoyl-sn-glycero-3-phosphoethanolamine + 1-hexadecanoyl-N-(acetyl)-sphing-4-enine</text>
        <dbReference type="Rhea" id="RHEA:38831"/>
        <dbReference type="ChEBI" id="CHEBI:46979"/>
        <dbReference type="ChEBI" id="CHEBI:73008"/>
        <dbReference type="ChEBI" id="CHEBI:76077"/>
        <dbReference type="ChEBI" id="CHEBI:76090"/>
    </reaction>
    <physiologicalReaction direction="left-to-right" evidence="3">
        <dbReference type="Rhea" id="RHEA:38832"/>
    </physiologicalReaction>
</comment>
<comment type="catalytic activity">
    <reaction evidence="3">
        <text>1-hexadecanoyl-2-(5Z,8Z,11Z,14Z-eicosatetraenoyl)-sn-glycero-3-phosphoethanolamine + N-(acetyl)-sphing-4-enine = 2-(5Z,8Z,11Z,14Z)-eicosatetraenoyl-sn-glycero-3-phosphoethanolamine + 1-hexadecanoyl-N-(acetyl)-sphing-4-enine</text>
        <dbReference type="Rhea" id="RHEA:38843"/>
        <dbReference type="ChEBI" id="CHEBI:46979"/>
        <dbReference type="ChEBI" id="CHEBI:73009"/>
        <dbReference type="ChEBI" id="CHEBI:76077"/>
        <dbReference type="ChEBI" id="CHEBI:76091"/>
    </reaction>
    <physiologicalReaction direction="left-to-right" evidence="3">
        <dbReference type="Rhea" id="RHEA:38844"/>
    </physiologicalReaction>
</comment>
<comment type="catalytic activity">
    <reaction evidence="3">
        <text>N-(acetyl)-sphing-4-enine + a 1,2-diacyl-sn-glycero-3-phosphoethanolamine = 1-O-acyl-N-(acetyl)-sphing-4-enine + a 1-acyl-sn-glycero-3-phosphoethanolamine</text>
        <dbReference type="Rhea" id="RHEA:44532"/>
        <dbReference type="ChEBI" id="CHEBI:46979"/>
        <dbReference type="ChEBI" id="CHEBI:64381"/>
        <dbReference type="ChEBI" id="CHEBI:64612"/>
        <dbReference type="ChEBI" id="CHEBI:84483"/>
    </reaction>
    <physiologicalReaction direction="left-to-right" evidence="3">
        <dbReference type="Rhea" id="RHEA:44533"/>
    </physiologicalReaction>
</comment>
<comment type="catalytic activity">
    <reaction evidence="3">
        <text>1-hexadecanoyl-2-(9Z-octadecenoyl)-sn-glycero-3-phosphoethanolamine + N-(acetyl)-sphing-4-enine = 1-(9Z-octadecenoyl)-N-(acetyl)-sphing-4-enine + 1-hexadecanoyl-sn-glycero-3-phosphoethanolamine</text>
        <dbReference type="Rhea" id="RHEA:38823"/>
        <dbReference type="ChEBI" id="CHEBI:46979"/>
        <dbReference type="ChEBI" id="CHEBI:73004"/>
        <dbReference type="ChEBI" id="CHEBI:73007"/>
        <dbReference type="ChEBI" id="CHEBI:76054"/>
    </reaction>
    <physiologicalReaction direction="left-to-right" evidence="3">
        <dbReference type="Rhea" id="RHEA:38824"/>
    </physiologicalReaction>
</comment>
<comment type="catalytic activity">
    <reaction evidence="3">
        <text>1-hexadecanoyl-2-(9Z,12Z-octadecadienoyl)-sn-glycero-3-phosphoethanolamine + N-(acetyl)-sphing-4-enine = 1-(9Z,12Z-octadecadienoyl)-N-acetylsphing-4-enine + 1-hexadecanoyl-sn-glycero-3-phosphoethanolamine</text>
        <dbReference type="Rhea" id="RHEA:38835"/>
        <dbReference type="ChEBI" id="CHEBI:46979"/>
        <dbReference type="ChEBI" id="CHEBI:73004"/>
        <dbReference type="ChEBI" id="CHEBI:73008"/>
        <dbReference type="ChEBI" id="CHEBI:76086"/>
    </reaction>
    <physiologicalReaction direction="left-to-right" evidence="3">
        <dbReference type="Rhea" id="RHEA:38836"/>
    </physiologicalReaction>
</comment>
<comment type="catalytic activity">
    <reaction evidence="3">
        <text>1-hexadecanoyl-2-(5Z,8Z,11Z,14Z-eicosatetraenoyl)-sn-glycero-3-phosphoethanolamine + N-(acetyl)-sphing-4-enine = 1-(5Z,8Z,11Z,14Z)-eicosatetraenoyl-N-(acetyl)-sphing-4-enine + 1-hexadecanoyl-sn-glycero-3-phosphoethanolamine</text>
        <dbReference type="Rhea" id="RHEA:38839"/>
        <dbReference type="ChEBI" id="CHEBI:46979"/>
        <dbReference type="ChEBI" id="CHEBI:73004"/>
        <dbReference type="ChEBI" id="CHEBI:73009"/>
        <dbReference type="ChEBI" id="CHEBI:76080"/>
    </reaction>
    <physiologicalReaction direction="left-to-right" evidence="3">
        <dbReference type="Rhea" id="RHEA:38840"/>
    </physiologicalReaction>
</comment>
<comment type="catalytic activity">
    <reaction evidence="3">
        <text>N-(acetyl)-sphing-4-enine + a 1,2-diacyl-sn-glycero-3-phosphocholine = 1-O-acyl-N-(acetyl)-sphing-4-enine + a 2-acyl-sn-glycero-3-phosphocholine</text>
        <dbReference type="Rhea" id="RHEA:44512"/>
        <dbReference type="ChEBI" id="CHEBI:46979"/>
        <dbReference type="ChEBI" id="CHEBI:57643"/>
        <dbReference type="ChEBI" id="CHEBI:57875"/>
        <dbReference type="ChEBI" id="CHEBI:84483"/>
    </reaction>
    <physiologicalReaction direction="left-to-right" evidence="3">
        <dbReference type="Rhea" id="RHEA:44513"/>
    </physiologicalReaction>
</comment>
<comment type="catalytic activity">
    <reaction evidence="3">
        <text>1-hexadecanoyl-2-(9Z-octadecenoyl)-sn-glycero-3-phosphocholine + N-(acetyl)-sphing-4-enine = 1-hexadecanoyl-N-(acetyl)-sphing-4-enine + 2-(9Z-octadecenoyl)-sn-glycero-3-phosphocholine</text>
        <dbReference type="Rhea" id="RHEA:38759"/>
        <dbReference type="ChEBI" id="CHEBI:46979"/>
        <dbReference type="ChEBI" id="CHEBI:73001"/>
        <dbReference type="ChEBI" id="CHEBI:76071"/>
        <dbReference type="ChEBI" id="CHEBI:76077"/>
    </reaction>
    <physiologicalReaction direction="left-to-right" evidence="3">
        <dbReference type="Rhea" id="RHEA:38760"/>
    </physiologicalReaction>
</comment>
<comment type="catalytic activity">
    <reaction evidence="3">
        <text>1-hexadecanoyl-2-(9Z,12Z-octadecadienoyl)-sn-glycero-3-phosphocholine + N-(acetyl)-sphing-4-enine = 2-(9Z,12Z-octadecadienoyl)-sn-glycero-3-phosphocholine + 1-hexadecanoyl-N-(acetyl)-sphing-4-enine</text>
        <dbReference type="Rhea" id="RHEA:38811"/>
        <dbReference type="ChEBI" id="CHEBI:46979"/>
        <dbReference type="ChEBI" id="CHEBI:73002"/>
        <dbReference type="ChEBI" id="CHEBI:76077"/>
        <dbReference type="ChEBI" id="CHEBI:76084"/>
    </reaction>
    <physiologicalReaction direction="left-to-right" evidence="3">
        <dbReference type="Rhea" id="RHEA:38812"/>
    </physiologicalReaction>
</comment>
<comment type="catalytic activity">
    <reaction evidence="3">
        <text>1-hexadecanoyl-2-(5Z,8Z,11Z,14Z-eicosatetraenoyl)-sn-glycero-3-phosphocholine + N-(acetyl)-sphing-4-enine = 1-hexadecanoyl-N-(acetyl)-sphing-4-enine + 2-(5Z,8Z,11Z,14Z)-eicosatetraenoyl-sn-glycero-3-phosphocholine</text>
        <dbReference type="Rhea" id="RHEA:38775"/>
        <dbReference type="ChEBI" id="CHEBI:46979"/>
        <dbReference type="ChEBI" id="CHEBI:73003"/>
        <dbReference type="ChEBI" id="CHEBI:76077"/>
        <dbReference type="ChEBI" id="CHEBI:76079"/>
    </reaction>
    <physiologicalReaction direction="left-to-right" evidence="3">
        <dbReference type="Rhea" id="RHEA:38776"/>
    </physiologicalReaction>
</comment>
<comment type="catalytic activity">
    <reaction evidence="3">
        <text>1-hexadecanoyl-2-(4Z,7Z,10Z,13Z,16Z,19Z-docosahexaenoyl)-sn-glycero-3-phosphocholine + N-(acetyl)-sphing-4-enine = 2-(4Z,7Z,10Z,13Z,16Z,19Z-docosahexaenoyl)-sn-glycero-3-phosphocholine + 1-hexadecanoyl-N-(acetyl)-sphing-4-enine</text>
        <dbReference type="Rhea" id="RHEA:38815"/>
        <dbReference type="ChEBI" id="CHEBI:46979"/>
        <dbReference type="ChEBI" id="CHEBI:74963"/>
        <dbReference type="ChEBI" id="CHEBI:76077"/>
        <dbReference type="ChEBI" id="CHEBI:76085"/>
    </reaction>
    <physiologicalReaction direction="left-to-right" evidence="3">
        <dbReference type="Rhea" id="RHEA:38816"/>
    </physiologicalReaction>
</comment>
<comment type="catalytic activity">
    <reaction evidence="3">
        <text>1-hexadecanoyl-2-nonadioyl-sn-glycero-3-phosphocholine + N-(acetyl)-sphing-4-enine = 2-nonadioyl-sn-glycero-3-phosphocholine + 1-hexadecanoyl-N-(acetyl)-sphing-4-enine</text>
        <dbReference type="Rhea" id="RHEA:62472"/>
        <dbReference type="ChEBI" id="CHEBI:46979"/>
        <dbReference type="ChEBI" id="CHEBI:76077"/>
        <dbReference type="ChEBI" id="CHEBI:78207"/>
        <dbReference type="ChEBI" id="CHEBI:145780"/>
    </reaction>
    <physiologicalReaction direction="left-to-right" evidence="3">
        <dbReference type="Rhea" id="RHEA:62473"/>
    </physiologicalReaction>
</comment>
<comment type="catalytic activity">
    <reaction evidence="3">
        <text>1-octadecanoyl-2-(9Z-octadecenoyl)-sn-glycero-3-phosphocholine + N-(acetyl)-sphing-4-enine = 1-octadecanoyl-N-(acetyl)-sphing-4-enine + 2-(9Z-octadecenoyl)-sn-glycero-3-phosphocholine</text>
        <dbReference type="Rhea" id="RHEA:38799"/>
        <dbReference type="ChEBI" id="CHEBI:46979"/>
        <dbReference type="ChEBI" id="CHEBI:75034"/>
        <dbReference type="ChEBI" id="CHEBI:76071"/>
        <dbReference type="ChEBI" id="CHEBI:76074"/>
    </reaction>
    <physiologicalReaction direction="left-to-right" evidence="3">
        <dbReference type="Rhea" id="RHEA:38800"/>
    </physiologicalReaction>
</comment>
<comment type="catalytic activity">
    <reaction evidence="3">
        <text>1-(9Z)-octadecenoyl-2-octadecanoyl-sn-glycero-3-phosphocholine + N-(acetyl)-sphing-4-enine = 2-octadecanoyl-sn-glycero-3-phosphocholine + 1-(9Z-octadecenoyl)-N-(acetyl)-sphing-4-enine</text>
        <dbReference type="Rhea" id="RHEA:38791"/>
        <dbReference type="ChEBI" id="CHEBI:46979"/>
        <dbReference type="ChEBI" id="CHEBI:76054"/>
        <dbReference type="ChEBI" id="CHEBI:76073"/>
        <dbReference type="ChEBI" id="CHEBI:76076"/>
    </reaction>
    <physiologicalReaction direction="left-to-right" evidence="3">
        <dbReference type="Rhea" id="RHEA:38792"/>
    </physiologicalReaction>
</comment>
<comment type="catalytic activity">
    <reaction evidence="2">
        <text>1-octadecanoyl-2-(5Z,8Z,11Z,14Z-eicosatetraenoyl)-sn-glycero-3-phosphocholine + N-(acetyl)-sphing-4-enine = 1-octadecanoyl-N-(acetyl)-sphing-4-enine + 2-(5Z,8Z,11Z,14Z)-eicosatetraenoyl-sn-glycero-3-phosphocholine</text>
        <dbReference type="Rhea" id="RHEA:57120"/>
        <dbReference type="ChEBI" id="CHEBI:46979"/>
        <dbReference type="ChEBI" id="CHEBI:74965"/>
        <dbReference type="ChEBI" id="CHEBI:76074"/>
        <dbReference type="ChEBI" id="CHEBI:76079"/>
    </reaction>
    <physiologicalReaction direction="left-to-right" evidence="2">
        <dbReference type="Rhea" id="RHEA:57121"/>
    </physiologicalReaction>
</comment>
<comment type="catalytic activity">
    <reaction evidence="3">
        <text>1-(9Z-octadecenoyl)-2-hexadecanoyl-sn-glycero-3-phosphocholine + N-(acetyl)-sphing-4-enine = 1-(9Z-octadecenoyl)-N-(acetyl)-sphing-4-enine + 2-hexadecanoyl-sn-glycero-3-phosphocholine</text>
        <dbReference type="Rhea" id="RHEA:38767"/>
        <dbReference type="ChEBI" id="CHEBI:46979"/>
        <dbReference type="ChEBI" id="CHEBI:74667"/>
        <dbReference type="ChEBI" id="CHEBI:76054"/>
        <dbReference type="ChEBI" id="CHEBI:76078"/>
    </reaction>
    <physiologicalReaction direction="left-to-right" evidence="3">
        <dbReference type="Rhea" id="RHEA:38768"/>
    </physiologicalReaction>
</comment>
<comment type="catalytic activity">
    <reaction evidence="3">
        <text>N-(acetyl)-sphing-4-enine + a 1,2-diacyl-sn-glycero-3-phosphocholine = 1-O-acyl-N-(acetyl)-sphing-4-enine + a 1-acyl-sn-glycero-3-phosphocholine</text>
        <dbReference type="Rhea" id="RHEA:44508"/>
        <dbReference type="ChEBI" id="CHEBI:46979"/>
        <dbReference type="ChEBI" id="CHEBI:57643"/>
        <dbReference type="ChEBI" id="CHEBI:58168"/>
        <dbReference type="ChEBI" id="CHEBI:84483"/>
    </reaction>
    <physiologicalReaction direction="left-to-right" evidence="3">
        <dbReference type="Rhea" id="RHEA:44509"/>
    </physiologicalReaction>
</comment>
<comment type="catalytic activity">
    <reaction evidence="3">
        <text>1-hexadecanoyl-2-(9Z-octadecenoyl)-sn-glycero-3-phosphocholine + N-(acetyl)-sphing-4-enine = 1-(9Z-octadecenoyl)-N-(acetyl)-sphing-4-enine + 1-hexadecanoyl-sn-glycero-3-phosphocholine</text>
        <dbReference type="Rhea" id="RHEA:38755"/>
        <dbReference type="ChEBI" id="CHEBI:46979"/>
        <dbReference type="ChEBI" id="CHEBI:72998"/>
        <dbReference type="ChEBI" id="CHEBI:73001"/>
        <dbReference type="ChEBI" id="CHEBI:76054"/>
    </reaction>
    <physiologicalReaction direction="left-to-right" evidence="3">
        <dbReference type="Rhea" id="RHEA:38756"/>
    </physiologicalReaction>
</comment>
<comment type="catalytic activity">
    <reaction evidence="3">
        <text>1-hexadecanoyl-2-(9Z,12Z-octadecadienoyl)-sn-glycero-3-phosphocholine + N-(acetyl)-sphing-4-enine = 1-(9Z,12Z-octadecadienoyl)-N-acetylsphing-4-enine + 1-hexadecanoyl-sn-glycero-3-phosphocholine</text>
        <dbReference type="Rhea" id="RHEA:38807"/>
        <dbReference type="ChEBI" id="CHEBI:46979"/>
        <dbReference type="ChEBI" id="CHEBI:72998"/>
        <dbReference type="ChEBI" id="CHEBI:73002"/>
        <dbReference type="ChEBI" id="CHEBI:76086"/>
    </reaction>
    <physiologicalReaction direction="left-to-right" evidence="3">
        <dbReference type="Rhea" id="RHEA:38808"/>
    </physiologicalReaction>
</comment>
<comment type="catalytic activity">
    <reaction evidence="3">
        <text>1-hexadecanoyl-2-(5Z,8Z,11Z,14Z-eicosatetraenoyl)-sn-glycero-3-phosphocholine + N-(acetyl)-sphing-4-enine = 1-(5Z,8Z,11Z,14Z)-eicosatetraenoyl-N-(acetyl)-sphing-4-enine + 1-hexadecanoyl-sn-glycero-3-phosphocholine</text>
        <dbReference type="Rhea" id="RHEA:38771"/>
        <dbReference type="ChEBI" id="CHEBI:46979"/>
        <dbReference type="ChEBI" id="CHEBI:72998"/>
        <dbReference type="ChEBI" id="CHEBI:73003"/>
        <dbReference type="ChEBI" id="CHEBI:76080"/>
    </reaction>
    <physiologicalReaction direction="left-to-right" evidence="3">
        <dbReference type="Rhea" id="RHEA:38772"/>
    </physiologicalReaction>
</comment>
<comment type="catalytic activity">
    <reaction evidence="3">
        <text>1-hexadecanoyl-2-(4Z,7Z,10Z,13Z,16Z,19Z-docosahexaenoyl)-sn-glycero-3-phosphocholine + N-(acetyl)-sphing-4-enine = 1-(4Z,7Z,10Z,13Z,16Z,19Z-docosahexaenoyl)-N-(acetyl)-sphing-4-enine + 1-hexadecanoyl-sn-glycero-3-phosphocholine</text>
        <dbReference type="Rhea" id="RHEA:38819"/>
        <dbReference type="ChEBI" id="CHEBI:46979"/>
        <dbReference type="ChEBI" id="CHEBI:72998"/>
        <dbReference type="ChEBI" id="CHEBI:74963"/>
        <dbReference type="ChEBI" id="CHEBI:76087"/>
    </reaction>
    <physiologicalReaction direction="left-to-right" evidence="3">
        <dbReference type="Rhea" id="RHEA:38820"/>
    </physiologicalReaction>
</comment>
<comment type="catalytic activity">
    <reaction evidence="3">
        <text>1-octadecanoyl-2-(9Z-octadecenoyl)-sn-glycero-3-phosphocholine + N-(acetyl)-sphing-4-enine = 1-(9Z-octadecenoyl)-N-(acetyl)-sphing-4-enine + 1-octadecanoyl-sn-glycero-3-phosphocholine</text>
        <dbReference type="Rhea" id="RHEA:38795"/>
        <dbReference type="ChEBI" id="CHEBI:46979"/>
        <dbReference type="ChEBI" id="CHEBI:73858"/>
        <dbReference type="ChEBI" id="CHEBI:75034"/>
        <dbReference type="ChEBI" id="CHEBI:76054"/>
    </reaction>
    <physiologicalReaction direction="left-to-right" evidence="3">
        <dbReference type="Rhea" id="RHEA:38796"/>
    </physiologicalReaction>
</comment>
<comment type="catalytic activity">
    <reaction evidence="2">
        <text>1-octadecanoyl-2-(9Z,12Z)-octadecadienoyl-sn-glycero-3-phosphocholine + N-(acetyl)-sphing-4-enine = 1-(9Z,12Z-octadecadienoyl)-N-acetylsphing-4-enine + 1-octadecanoyl-sn-glycero-3-phosphocholine</text>
        <dbReference type="Rhea" id="RHEA:57108"/>
        <dbReference type="ChEBI" id="CHEBI:46979"/>
        <dbReference type="ChEBI" id="CHEBI:73858"/>
        <dbReference type="ChEBI" id="CHEBI:76086"/>
        <dbReference type="ChEBI" id="CHEBI:84822"/>
    </reaction>
    <physiologicalReaction direction="left-to-right" evidence="2">
        <dbReference type="Rhea" id="RHEA:57109"/>
    </physiologicalReaction>
</comment>
<comment type="catalytic activity">
    <reaction evidence="3">
        <text>1-(9Z-octadecenoyl)-2-hexadecanoyl-sn-glycero-3-phosphocholine + N-(acetyl)-sphing-4-enine = 1-hexadecanoyl-N-(acetyl)-sphing-4-enine + 1-(9Z-octadecenoyl)-sn-glycero-3-phosphocholine</text>
        <dbReference type="Rhea" id="RHEA:38763"/>
        <dbReference type="ChEBI" id="CHEBI:28610"/>
        <dbReference type="ChEBI" id="CHEBI:46979"/>
        <dbReference type="ChEBI" id="CHEBI:74667"/>
        <dbReference type="ChEBI" id="CHEBI:76077"/>
    </reaction>
    <physiologicalReaction direction="left-to-right" evidence="3">
        <dbReference type="Rhea" id="RHEA:38764"/>
    </physiologicalReaction>
</comment>
<comment type="catalytic activity">
    <reaction evidence="3">
        <text>1-(9Z)-octadecenoyl-2-octadecanoyl-sn-glycero-3-phosphocholine + N-(acetyl)-sphing-4-enine = 1-octadecanoyl-N-(acetyl)-sphing-4-enine + 1-(9Z-octadecenoyl)-sn-glycero-3-phosphocholine</text>
        <dbReference type="Rhea" id="RHEA:38803"/>
        <dbReference type="ChEBI" id="CHEBI:28610"/>
        <dbReference type="ChEBI" id="CHEBI:46979"/>
        <dbReference type="ChEBI" id="CHEBI:76073"/>
        <dbReference type="ChEBI" id="CHEBI:76074"/>
    </reaction>
    <physiologicalReaction direction="left-to-right" evidence="3">
        <dbReference type="Rhea" id="RHEA:38804"/>
    </physiologicalReaction>
</comment>
<comment type="catalytic activity">
    <reaction evidence="3">
        <text>1,2-di-(9Z-octadecenoyl)-sn-glycero-3-phosphocholine + N-(acetyl)-sphing-4-enine = 1-(9Z-octadecenoyl)-N-(acetyl)-sphing-4-enine + 1-(9Z-octadecenoyl)-sn-glycero-3-phosphocholine</text>
        <dbReference type="Rhea" id="RHEA:38703"/>
        <dbReference type="ChEBI" id="CHEBI:28610"/>
        <dbReference type="ChEBI" id="CHEBI:46979"/>
        <dbReference type="ChEBI" id="CHEBI:74669"/>
        <dbReference type="ChEBI" id="CHEBI:76054"/>
    </reaction>
    <physiologicalReaction direction="left-to-right" evidence="3">
        <dbReference type="Rhea" id="RHEA:38704"/>
    </physiologicalReaction>
</comment>
<comment type="catalytic activity">
    <reaction evidence="2">
        <text>1-octadecanoyl-2-(5Z,8Z,11Z,14Z-eicosatetraenoyl)-sn-glycero-3-phosphocholine + N-(acetyl)-sphing-4-enine = 1-(5Z,8Z,11Z,14Z)-eicosatetraenoyl-N-(acetyl)-sphing-4-enine + 1-octadecanoyl-sn-glycero-3-phosphocholine</text>
        <dbReference type="Rhea" id="RHEA:57116"/>
        <dbReference type="ChEBI" id="CHEBI:46979"/>
        <dbReference type="ChEBI" id="CHEBI:73858"/>
        <dbReference type="ChEBI" id="CHEBI:74965"/>
        <dbReference type="ChEBI" id="CHEBI:76080"/>
    </reaction>
    <physiologicalReaction direction="left-to-right" evidence="2">
        <dbReference type="Rhea" id="RHEA:57117"/>
    </physiologicalReaction>
</comment>
<comment type="catalytic activity">
    <reaction evidence="2">
        <text>a 1,2-diacyl-sn-glycero-3-phospho-L-serine + N-(acetyl)-sphing-4-enine = a 2-acyl-sn-glycero-3-phospho-L-serine + 1-O-acyl-N-(acetyl)-sphing-4-enine</text>
        <dbReference type="Rhea" id="RHEA:78355"/>
        <dbReference type="ChEBI" id="CHEBI:46979"/>
        <dbReference type="ChEBI" id="CHEBI:57262"/>
        <dbReference type="ChEBI" id="CHEBI:65214"/>
        <dbReference type="ChEBI" id="CHEBI:84483"/>
    </reaction>
    <physiologicalReaction direction="left-to-right" evidence="2">
        <dbReference type="Rhea" id="RHEA:78356"/>
    </physiologicalReaction>
</comment>
<comment type="catalytic activity">
    <reaction evidence="2">
        <text>1-octadecanoyl-2-(9Z-octadecenoyl)-sn-glycero-3-phospho-L-serine + N-(acetyl)-sphing-4-enine = 2-(9Z-octadecenoyl)-sn-glycero-3-phospho-L-serine + 1-octadecanoyl-N-(acetyl)-sphing-4-enine</text>
        <dbReference type="Rhea" id="RHEA:57140"/>
        <dbReference type="ChEBI" id="CHEBI:46979"/>
        <dbReference type="ChEBI" id="CHEBI:76074"/>
        <dbReference type="ChEBI" id="CHEBI:77342"/>
        <dbReference type="ChEBI" id="CHEBI:78260"/>
    </reaction>
    <physiologicalReaction direction="left-to-right" evidence="2">
        <dbReference type="Rhea" id="RHEA:57141"/>
    </physiologicalReaction>
</comment>
<comment type="catalytic activity">
    <reaction evidence="2">
        <text>a 1,2-diacyl-sn-glycero-3-phospho-L-serine + N-(acetyl)-sphing-4-enine = 1-O-acyl-N-(acetyl)-sphing-4-enine + a 1-acyl-sn-glycero-3-phospho-L-serine</text>
        <dbReference type="Rhea" id="RHEA:78351"/>
        <dbReference type="ChEBI" id="CHEBI:46979"/>
        <dbReference type="ChEBI" id="CHEBI:57262"/>
        <dbReference type="ChEBI" id="CHEBI:64379"/>
        <dbReference type="ChEBI" id="CHEBI:84483"/>
    </reaction>
    <physiologicalReaction direction="left-to-right" evidence="2">
        <dbReference type="Rhea" id="RHEA:78352"/>
    </physiologicalReaction>
</comment>
<comment type="catalytic activity">
    <reaction evidence="2">
        <text>1-octadecanoyl-2-(9Z-octadecenoyl)-sn-glycero-3-phospho-L-serine + N-(acetyl)-sphing-4-enine = 1-octadecanoyl-sn-glycero-3-phosphoserine + 1-(9Z-octadecenoyl)-N-(acetyl)-sphing-4-enine</text>
        <dbReference type="Rhea" id="RHEA:57136"/>
        <dbReference type="ChEBI" id="CHEBI:46979"/>
        <dbReference type="ChEBI" id="CHEBI:76054"/>
        <dbReference type="ChEBI" id="CHEBI:78260"/>
        <dbReference type="ChEBI" id="CHEBI:84467"/>
    </reaction>
    <physiologicalReaction direction="left-to-right" evidence="2">
        <dbReference type="Rhea" id="RHEA:57137"/>
    </physiologicalReaction>
</comment>
<comment type="catalytic activity">
    <reaction evidence="2">
        <text>a 1,2-diacyl-sn-glycero-3-phospho-(1'-sn-glycerol) + N-(acetyl)-sphing-4-enine = 2-acyl-sn-glycero-3-phospho-(1'-sn-glycerol) + 1-O-acyl-N-(acetyl)-sphing-4-enine</text>
        <dbReference type="Rhea" id="RHEA:78359"/>
        <dbReference type="ChEBI" id="CHEBI:46979"/>
        <dbReference type="ChEBI" id="CHEBI:64716"/>
        <dbReference type="ChEBI" id="CHEBI:76528"/>
        <dbReference type="ChEBI" id="CHEBI:84483"/>
    </reaction>
    <physiologicalReaction direction="left-to-right" evidence="2">
        <dbReference type="Rhea" id="RHEA:78360"/>
    </physiologicalReaction>
</comment>
<comment type="catalytic activity">
    <reaction evidence="2">
        <text>1-octadecanoyl-2-(9Z-octadecenoyl)-sn-glycero-3-phospho-(1'-sn-glycerol) + N-(acetyl)-sphing-4-enine = 2-(9Z-octadecenoyl)-sn-glycero-3-phospho-(1'-sn-glycerol) + 1-octadecanoyl-N-(acetyl)-sphing-4-enine</text>
        <dbReference type="Rhea" id="RHEA:57144"/>
        <dbReference type="ChEBI" id="CHEBI:46979"/>
        <dbReference type="ChEBI" id="CHEBI:72845"/>
        <dbReference type="ChEBI" id="CHEBI:76074"/>
        <dbReference type="ChEBI" id="CHEBI:141490"/>
    </reaction>
    <physiologicalReaction direction="left-to-right" evidence="2">
        <dbReference type="Rhea" id="RHEA:57145"/>
    </physiologicalReaction>
</comment>
<comment type="catalytic activity">
    <reaction evidence="2">
        <text>a 1,2-diacyl-sn-glycero-3-phospho-(1'-sn-glycerol) + N-(acetyl)-sphing-4-enine = 1-O-acyl-N-(acetyl)-sphing-4-enine + 1-acyl-sn-glycero-3-phospho-(1'-sn-glycerol)</text>
        <dbReference type="Rhea" id="RHEA:78363"/>
        <dbReference type="ChEBI" id="CHEBI:46979"/>
        <dbReference type="ChEBI" id="CHEBI:64716"/>
        <dbReference type="ChEBI" id="CHEBI:64840"/>
        <dbReference type="ChEBI" id="CHEBI:84483"/>
    </reaction>
    <physiologicalReaction direction="left-to-right" evidence="2">
        <dbReference type="Rhea" id="RHEA:78364"/>
    </physiologicalReaction>
</comment>
<comment type="catalytic activity">
    <reaction evidence="2">
        <text>1-octadecanoyl-2-(9Z-octadecenoyl)-sn-glycero-3-phospho-(1'-sn-glycerol) + N-(acetyl)-sphing-4-enine = 1-octadecanoyl-sn-glycero-3-phospho-(1'-sn-glycerol) + 1-(9Z-octadecenoyl)-N-(acetyl)-sphing-4-enine</text>
        <dbReference type="Rhea" id="RHEA:57148"/>
        <dbReference type="ChEBI" id="CHEBI:46979"/>
        <dbReference type="ChEBI" id="CHEBI:72827"/>
        <dbReference type="ChEBI" id="CHEBI:72845"/>
        <dbReference type="ChEBI" id="CHEBI:76054"/>
    </reaction>
    <physiologicalReaction direction="left-to-right" evidence="2">
        <dbReference type="Rhea" id="RHEA:57149"/>
    </physiologicalReaction>
</comment>
<comment type="catalytic activity">
    <reaction evidence="3">
        <text>an N-acylethanolamine + a 1,2-diacyl-sn-glycero-3-phosphocholine = 2-(acylamino)ethyl fatty acid + a 2-acyl-sn-glycero-3-phosphocholine</text>
        <dbReference type="Rhea" id="RHEA:78055"/>
        <dbReference type="ChEBI" id="CHEBI:52640"/>
        <dbReference type="ChEBI" id="CHEBI:57643"/>
        <dbReference type="ChEBI" id="CHEBI:57875"/>
        <dbReference type="ChEBI" id="CHEBI:84481"/>
    </reaction>
    <physiologicalReaction direction="left-to-right" evidence="3">
        <dbReference type="Rhea" id="RHEA:78056"/>
    </physiologicalReaction>
</comment>
<comment type="catalytic activity">
    <reaction evidence="3">
        <text>an N-acylethanolamine + a 1,2-diacyl-sn-glycero-3-phosphocholine = 2-(acylamino)ethyl fatty acid + a 1-acyl-sn-glycero-3-phosphocholine</text>
        <dbReference type="Rhea" id="RHEA:78059"/>
        <dbReference type="ChEBI" id="CHEBI:52640"/>
        <dbReference type="ChEBI" id="CHEBI:57643"/>
        <dbReference type="ChEBI" id="CHEBI:58168"/>
        <dbReference type="ChEBI" id="CHEBI:84481"/>
    </reaction>
    <physiologicalReaction direction="left-to-right" evidence="3">
        <dbReference type="Rhea" id="RHEA:78060"/>
    </physiologicalReaction>
</comment>
<comment type="catalytic activity">
    <reaction evidence="3">
        <text>N-(5Z,8Z,11Z,14Z-eicosatetraenoyl)-ethanolamine + 1,2-di-(9Z-octadecenoyl)-sn-glycero-3-phosphocholine = 2-[(5Z,8Z,11Z,14Z)-eicosatetraenoylamino]ethyl (9Z)-octadecenoate + (9Z-octadecenoyl)-sn-glycero-3-phosphocholine</text>
        <dbReference type="Rhea" id="RHEA:38751"/>
        <dbReference type="ChEBI" id="CHEBI:2700"/>
        <dbReference type="ChEBI" id="CHEBI:74669"/>
        <dbReference type="ChEBI" id="CHEBI:76070"/>
        <dbReference type="ChEBI" id="CHEBI:76083"/>
    </reaction>
    <physiologicalReaction direction="left-to-right" evidence="3">
        <dbReference type="Rhea" id="RHEA:38752"/>
    </physiologicalReaction>
</comment>
<comment type="catalytic activity">
    <reaction evidence="3">
        <text>N-(9Z-octadecenoyl) ethanolamine + 1,2-di-(9Z-octadecenoyl)-sn-glycero-3-phosphocholine = 2-[(9Z)-octadecenoylamino]ethyl (9Z)-octadecenoate + (9Z-octadecenoyl)-sn-glycero-3-phosphocholine</text>
        <dbReference type="Rhea" id="RHEA:38747"/>
        <dbReference type="ChEBI" id="CHEBI:71466"/>
        <dbReference type="ChEBI" id="CHEBI:74669"/>
        <dbReference type="ChEBI" id="CHEBI:76068"/>
        <dbReference type="ChEBI" id="CHEBI:76083"/>
    </reaction>
    <physiologicalReaction direction="left-to-right" evidence="3">
        <dbReference type="Rhea" id="RHEA:38748"/>
    </physiologicalReaction>
</comment>
<comment type="catalytic activity">
    <reaction evidence="3">
        <text>a 3-acyl-sn-glycerol + a 1,2-diacyl-sn-glycero-3-phosphocholine = a 1,3-diacylglycerol + a 1-acyl-sn-glycero-3-phosphocholine</text>
        <dbReference type="Rhea" id="RHEA:78131"/>
        <dbReference type="ChEBI" id="CHEBI:47777"/>
        <dbReference type="ChEBI" id="CHEBI:57643"/>
        <dbReference type="ChEBI" id="CHEBI:58168"/>
        <dbReference type="ChEBI" id="CHEBI:64760"/>
    </reaction>
    <physiologicalReaction direction="left-to-right" evidence="3">
        <dbReference type="Rhea" id="RHEA:78132"/>
    </physiologicalReaction>
</comment>
<comment type="catalytic activity">
    <reaction evidence="3">
        <text>a 3-acyl-sn-glycerol + a 1,2-diacyl-sn-glycero-3-phosphocholine = a 1,3-diacylglycerol + a 2-acyl-sn-glycero-3-phosphocholine</text>
        <dbReference type="Rhea" id="RHEA:78135"/>
        <dbReference type="ChEBI" id="CHEBI:47777"/>
        <dbReference type="ChEBI" id="CHEBI:57643"/>
        <dbReference type="ChEBI" id="CHEBI:57875"/>
        <dbReference type="ChEBI" id="CHEBI:64760"/>
    </reaction>
    <physiologicalReaction direction="left-to-right" evidence="3">
        <dbReference type="Rhea" id="RHEA:78136"/>
    </physiologicalReaction>
</comment>
<comment type="catalytic activity">
    <reaction evidence="3">
        <text>3-(9Z-octadecenoyl)-sn-glycerol + 1,2-di-(9Z-octadecenoyl)-sn-glycero-3-phosphocholine = 1,3-di-(9Z-octadecenoyl)-glycerol + (9Z-octadecenoyl)-sn-glycero-3-phosphocholine</text>
        <dbReference type="Rhea" id="RHEA:38743"/>
        <dbReference type="ChEBI" id="CHEBI:74669"/>
        <dbReference type="ChEBI" id="CHEBI:75735"/>
        <dbReference type="ChEBI" id="CHEBI:75938"/>
        <dbReference type="ChEBI" id="CHEBI:76083"/>
    </reaction>
    <physiologicalReaction direction="left-to-right" evidence="3">
        <dbReference type="Rhea" id="RHEA:38744"/>
    </physiologicalReaction>
</comment>
<comment type="catalytic activity">
    <reaction evidence="3">
        <text>3-hexadecanoyl-sn-glycerol + 1,2-di-(9Z-octadecenoyl)-sn-glycero-3-phosphocholine = 1-(9Z)-octadecenoyl-3-hexadecanoyl-sn-glycerol + (9Z-octadecenoyl)-sn-glycero-3-phosphocholine</text>
        <dbReference type="Rhea" id="RHEA:38731"/>
        <dbReference type="ChEBI" id="CHEBI:64757"/>
        <dbReference type="ChEBI" id="CHEBI:74669"/>
        <dbReference type="ChEBI" id="CHEBI:75867"/>
        <dbReference type="ChEBI" id="CHEBI:76083"/>
    </reaction>
    <physiologicalReaction direction="left-to-right" evidence="3">
        <dbReference type="Rhea" id="RHEA:38732"/>
    </physiologicalReaction>
</comment>
<comment type="catalytic activity">
    <reaction evidence="3">
        <text>a 1-acyl-sn-glycerol + a 1,2-diacyl-sn-glycero-3-phosphocholine = a 1,3-diacylglycerol + a 2-acyl-sn-glycero-3-phosphocholine</text>
        <dbReference type="Rhea" id="RHEA:78139"/>
        <dbReference type="ChEBI" id="CHEBI:47777"/>
        <dbReference type="ChEBI" id="CHEBI:57643"/>
        <dbReference type="ChEBI" id="CHEBI:57875"/>
        <dbReference type="ChEBI" id="CHEBI:64683"/>
    </reaction>
    <physiologicalReaction direction="left-to-right" evidence="3">
        <dbReference type="Rhea" id="RHEA:78140"/>
    </physiologicalReaction>
</comment>
<comment type="catalytic activity">
    <reaction evidence="3">
        <text>a 1-acyl-sn-glycerol + a 1,2-diacyl-sn-glycero-3-phosphocholine = a 1,3-diacylglycerol + a 1-acyl-sn-glycero-3-phosphocholine</text>
        <dbReference type="Rhea" id="RHEA:78143"/>
        <dbReference type="ChEBI" id="CHEBI:47777"/>
        <dbReference type="ChEBI" id="CHEBI:57643"/>
        <dbReference type="ChEBI" id="CHEBI:58168"/>
        <dbReference type="ChEBI" id="CHEBI:64683"/>
    </reaction>
    <physiologicalReaction direction="left-to-right" evidence="3">
        <dbReference type="Rhea" id="RHEA:78144"/>
    </physiologicalReaction>
</comment>
<comment type="catalytic activity">
    <reaction evidence="3">
        <text>1-(9Z-octadecenoyl)-sn-glycerol + 1,2-di-(9Z-octadecenoyl)-sn-glycero-3-phosphocholine = 1,3-di-(9Z-octadecenoyl)-glycerol + (9Z-octadecenoyl)-sn-glycero-3-phosphocholine</text>
        <dbReference type="Rhea" id="RHEA:38739"/>
        <dbReference type="ChEBI" id="CHEBI:74669"/>
        <dbReference type="ChEBI" id="CHEBI:75735"/>
        <dbReference type="ChEBI" id="CHEBI:75757"/>
        <dbReference type="ChEBI" id="CHEBI:76083"/>
    </reaction>
    <physiologicalReaction direction="left-to-right" evidence="3">
        <dbReference type="Rhea" id="RHEA:38740"/>
    </physiologicalReaction>
</comment>
<comment type="catalytic activity">
    <reaction evidence="3">
        <text>1-hexadecanoyl-sn-glycerol + 1,2-di-(9Z-octadecenoyl)-sn-glycero-3-phosphocholine = 1-hexadecanoyl-3-(9Z)-octadecenoyl-sn-glycerol + (9Z-octadecenoyl)-sn-glycero-3-phosphocholine</text>
        <dbReference type="Rhea" id="RHEA:38727"/>
        <dbReference type="ChEBI" id="CHEBI:74669"/>
        <dbReference type="ChEBI" id="CHEBI:75542"/>
        <dbReference type="ChEBI" id="CHEBI:75868"/>
        <dbReference type="ChEBI" id="CHEBI:76083"/>
    </reaction>
    <physiologicalReaction direction="left-to-right" evidence="3">
        <dbReference type="Rhea" id="RHEA:38728"/>
    </physiologicalReaction>
</comment>
<comment type="catalytic activity">
    <reaction evidence="3">
        <text>a 2-acylglycerol + a 1,2-diacyl-sn-glycero-3-phosphocholine = a 1,2-diacylglycerol + a 2-acyl-sn-glycero-3-phosphocholine</text>
        <dbReference type="Rhea" id="RHEA:78443"/>
        <dbReference type="ChEBI" id="CHEBI:17389"/>
        <dbReference type="ChEBI" id="CHEBI:49172"/>
        <dbReference type="ChEBI" id="CHEBI:57643"/>
        <dbReference type="ChEBI" id="CHEBI:57875"/>
    </reaction>
    <physiologicalReaction direction="left-to-right" evidence="3">
        <dbReference type="Rhea" id="RHEA:78444"/>
    </physiologicalReaction>
</comment>
<comment type="catalytic activity">
    <reaction evidence="3">
        <text>a 2-acylglycerol + a 1,2-diacyl-sn-glycero-3-phosphocholine = a 1,2-diacylglycerol + a 1-acyl-sn-glycero-3-phosphocholine</text>
        <dbReference type="Rhea" id="RHEA:78439"/>
        <dbReference type="ChEBI" id="CHEBI:17389"/>
        <dbReference type="ChEBI" id="CHEBI:49172"/>
        <dbReference type="ChEBI" id="CHEBI:57643"/>
        <dbReference type="ChEBI" id="CHEBI:58168"/>
    </reaction>
    <physiologicalReaction direction="left-to-right" evidence="3">
        <dbReference type="Rhea" id="RHEA:78440"/>
    </physiologicalReaction>
</comment>
<comment type="catalytic activity">
    <reaction evidence="3">
        <text>2-hexadecanoylglycerol + 1,2-di-(9Z-octadecenoyl)-sn-glycero-3-phosphocholine = 1-(9Z)-octadecenoyl-2-hexadecanoylglycerol + (9Z-octadecenoyl)-sn-glycero-3-phosphocholine</text>
        <dbReference type="Rhea" id="RHEA:38735"/>
        <dbReference type="ChEBI" id="CHEBI:74669"/>
        <dbReference type="ChEBI" id="CHEBI:75455"/>
        <dbReference type="ChEBI" id="CHEBI:76065"/>
        <dbReference type="ChEBI" id="CHEBI:76083"/>
    </reaction>
    <physiologicalReaction direction="left-to-right" evidence="3">
        <dbReference type="Rhea" id="RHEA:38736"/>
    </physiologicalReaction>
</comment>
<comment type="catalytic activity">
    <reaction evidence="3">
        <text>1-O-alkylglycerol + a 1,2-diacyl-sn-glycero-3-phosphocholine = 1-O-alkyl-3-acylglycerol + a 1-acyl-sn-glycero-3-phosphocholine</text>
        <dbReference type="Rhea" id="RHEA:78039"/>
        <dbReference type="ChEBI" id="CHEBI:57643"/>
        <dbReference type="ChEBI" id="CHEBI:58168"/>
        <dbReference type="ChEBI" id="CHEBI:76225"/>
        <dbReference type="ChEBI" id="CHEBI:77997"/>
    </reaction>
    <physiologicalReaction direction="left-to-right" evidence="3">
        <dbReference type="Rhea" id="RHEA:78040"/>
    </physiologicalReaction>
</comment>
<comment type="catalytic activity">
    <reaction evidence="3">
        <text>1-O-alkylglycerol + a 1,2-diacyl-sn-glycero-3-phosphocholine = 1-O-alkyl-3-acylglycerol + a 2-acyl-sn-glycero-3-phosphocholine</text>
        <dbReference type="Rhea" id="RHEA:78043"/>
        <dbReference type="ChEBI" id="CHEBI:57643"/>
        <dbReference type="ChEBI" id="CHEBI:57875"/>
        <dbReference type="ChEBI" id="CHEBI:76225"/>
        <dbReference type="ChEBI" id="CHEBI:77997"/>
    </reaction>
    <physiologicalReaction direction="left-to-right" evidence="3">
        <dbReference type="Rhea" id="RHEA:78044"/>
    </physiologicalReaction>
</comment>
<comment type="catalytic activity">
    <reaction evidence="3">
        <text>1-O-hexadecylglycerol + 1,2-di-(9Z-octadecenoyl)-sn-glycero-3-phosphocholine = 1-O-hexadecyl-3-(9Z)-octadecenoylglycerol + (9Z-octadecenoyl)-sn-glycero-3-phosphocholine</text>
        <dbReference type="Rhea" id="RHEA:38711"/>
        <dbReference type="ChEBI" id="CHEBI:74669"/>
        <dbReference type="ChEBI" id="CHEBI:76061"/>
        <dbReference type="ChEBI" id="CHEBI:76062"/>
        <dbReference type="ChEBI" id="CHEBI:76083"/>
    </reaction>
    <physiologicalReaction direction="left-to-right" evidence="3">
        <dbReference type="Rhea" id="RHEA:38712"/>
    </physiologicalReaction>
</comment>
<comment type="catalytic activity">
    <reaction evidence="3">
        <text>1-O-alkyl-2-acyl-sn-glycerol + a 1,2-diacyl-sn-glycero-3-phosphocholine = 1-O-alkyl-2,3-diacyl-sn-glycerol + a 2-acyl-sn-glycero-3-phosphocholine</text>
        <dbReference type="Rhea" id="RHEA:78431"/>
        <dbReference type="ChEBI" id="CHEBI:52595"/>
        <dbReference type="ChEBI" id="CHEBI:57643"/>
        <dbReference type="ChEBI" id="CHEBI:57875"/>
        <dbReference type="ChEBI" id="CHEBI:76585"/>
    </reaction>
    <physiologicalReaction direction="left-to-right" evidence="3">
        <dbReference type="Rhea" id="RHEA:78432"/>
    </physiologicalReaction>
</comment>
<comment type="catalytic activity">
    <reaction evidence="3">
        <text>1-O-alkyl-2-acyl-sn-glycerol + a 1,2-diacyl-sn-glycero-3-phosphocholine = 1-O-alkyl-2,3-diacyl-sn-glycerol + a 1-acyl-sn-glycero-3-phosphocholine</text>
        <dbReference type="Rhea" id="RHEA:78435"/>
        <dbReference type="ChEBI" id="CHEBI:52595"/>
        <dbReference type="ChEBI" id="CHEBI:57643"/>
        <dbReference type="ChEBI" id="CHEBI:58168"/>
        <dbReference type="ChEBI" id="CHEBI:76585"/>
    </reaction>
    <physiologicalReaction direction="left-to-right" evidence="3">
        <dbReference type="Rhea" id="RHEA:78436"/>
    </physiologicalReaction>
</comment>
<comment type="catalytic activity">
    <reaction evidence="3">
        <text>1-O-hexadecyl-2-acetyl-sn-glycerol + 1,2-di-(9Z-octadecenoyl)-sn-glycero-3-phosphocholine = 1-O-hexadecyl-2-acetyl-3-(9Z)-octadecenoyl-sn-glycerol + (9Z-octadecenoyl)-sn-glycero-3-phosphocholine</text>
        <dbReference type="Rhea" id="RHEA:38707"/>
        <dbReference type="ChEBI" id="CHEBI:74669"/>
        <dbReference type="ChEBI" id="CHEBI:75936"/>
        <dbReference type="ChEBI" id="CHEBI:76055"/>
        <dbReference type="ChEBI" id="CHEBI:76083"/>
    </reaction>
    <physiologicalReaction direction="left-to-right" evidence="3">
        <dbReference type="Rhea" id="RHEA:38708"/>
    </physiologicalReaction>
</comment>
<comment type="catalytic activity">
    <reaction evidence="3">
        <text>1-O-hexadecyl-2-O-methyl-sn-glycerol + 1,2-di-(9Z-octadecenoyl)-sn-glycero-3-phosphocholine = 1-O-hexadecyl-2-O-methyl-3-(9Z)-octadecenoyl-sn-glycerol + (9Z-octadecenoyl)-sn-glycero-3-phosphocholine</text>
        <dbReference type="Rhea" id="RHEA:38723"/>
        <dbReference type="ChEBI" id="CHEBI:74669"/>
        <dbReference type="ChEBI" id="CHEBI:76063"/>
        <dbReference type="ChEBI" id="CHEBI:76064"/>
        <dbReference type="ChEBI" id="CHEBI:76083"/>
    </reaction>
    <physiologicalReaction direction="left-to-right" evidence="3">
        <dbReference type="Rhea" id="RHEA:38724"/>
    </physiologicalReaction>
</comment>
<comment type="catalytic activity">
    <reaction evidence="4">
        <text>a 1,2-diacyl-sn-glycero-3-phosphoethanolamine + H2O = a 1-acyl-sn-glycero-3-phosphoethanolamine + a fatty acid + H(+)</text>
        <dbReference type="Rhea" id="RHEA:44604"/>
        <dbReference type="ChEBI" id="CHEBI:15377"/>
        <dbReference type="ChEBI" id="CHEBI:15378"/>
        <dbReference type="ChEBI" id="CHEBI:28868"/>
        <dbReference type="ChEBI" id="CHEBI:64381"/>
        <dbReference type="ChEBI" id="CHEBI:64612"/>
    </reaction>
    <physiologicalReaction direction="left-to-right" evidence="4">
        <dbReference type="Rhea" id="RHEA:44605"/>
    </physiologicalReaction>
</comment>
<comment type="catalytic activity">
    <reaction evidence="4">
        <text>1-acyl-2-(5Z,8Z,11Z,14Z)-eicosatetraenoyl-sn-glycero-3-phosphoethanolamine + H2O = a 1-acyl-sn-glycero-3-phosphoethanolamine + (5Z,8Z,11Z,14Z)-eicosatetraenoate + H(+)</text>
        <dbReference type="Rhea" id="RHEA:40647"/>
        <dbReference type="ChEBI" id="CHEBI:15377"/>
        <dbReference type="ChEBI" id="CHEBI:15378"/>
        <dbReference type="ChEBI" id="CHEBI:32395"/>
        <dbReference type="ChEBI" id="CHEBI:64381"/>
        <dbReference type="ChEBI" id="CHEBI:75067"/>
    </reaction>
    <physiologicalReaction direction="left-to-right" evidence="4">
        <dbReference type="Rhea" id="RHEA:40648"/>
    </physiologicalReaction>
</comment>
<comment type="catalytic activity">
    <reaction evidence="2">
        <text>a 1,2-diacyl-sn-glycero-3-phospho-(1'-sn-glycerol) + H2O = 1-acyl-sn-glycero-3-phospho-(1'-sn-glycerol) + a fatty acid + H(+)</text>
        <dbReference type="Rhea" id="RHEA:44416"/>
        <dbReference type="ChEBI" id="CHEBI:15377"/>
        <dbReference type="ChEBI" id="CHEBI:15378"/>
        <dbReference type="ChEBI" id="CHEBI:28868"/>
        <dbReference type="ChEBI" id="CHEBI:64716"/>
        <dbReference type="ChEBI" id="CHEBI:64840"/>
    </reaction>
    <physiologicalReaction direction="left-to-right" evidence="2">
        <dbReference type="Rhea" id="RHEA:44417"/>
    </physiologicalReaction>
</comment>
<comment type="catalytic activity">
    <reaction evidence="2">
        <text>1-hexadecanoyl-2-(9Z-octadecenoyl)-sn-glycero-3-phospho-(1'-sn-glycerol) + H2O = 1-hexadecanoyl-sn-glycero-3-phospho-(1'-sn-glycerol) + (9Z)-octadecenoate + H(+)</text>
        <dbReference type="Rhea" id="RHEA:40919"/>
        <dbReference type="ChEBI" id="CHEBI:15377"/>
        <dbReference type="ChEBI" id="CHEBI:15378"/>
        <dbReference type="ChEBI" id="CHEBI:30823"/>
        <dbReference type="ChEBI" id="CHEBI:72841"/>
        <dbReference type="ChEBI" id="CHEBI:75158"/>
    </reaction>
    <physiologicalReaction direction="left-to-right" evidence="2">
        <dbReference type="Rhea" id="RHEA:40920"/>
    </physiologicalReaction>
</comment>
<comment type="catalytic activity">
    <reaction evidence="2">
        <text>a 1,2-diacyl-sn-glycero-3-phospho-(1'-sn-glycerol) + H2O = 2-acyl-sn-glycero-3-phospho-(1'-sn-glycerol) + a fatty acid + H(+)</text>
        <dbReference type="Rhea" id="RHEA:67428"/>
        <dbReference type="ChEBI" id="CHEBI:15377"/>
        <dbReference type="ChEBI" id="CHEBI:15378"/>
        <dbReference type="ChEBI" id="CHEBI:28868"/>
        <dbReference type="ChEBI" id="CHEBI:64716"/>
        <dbReference type="ChEBI" id="CHEBI:76528"/>
    </reaction>
    <physiologicalReaction direction="left-to-right" evidence="2">
        <dbReference type="Rhea" id="RHEA:67429"/>
    </physiologicalReaction>
</comment>
<comment type="catalytic activity">
    <reaction evidence="2">
        <text>1-hexadecanoyl-2-(9Z-octadecenoyl)-sn-glycero-3-phospho-(1'-sn-glycerol) + H2O = 2-(9Z-octadecenoyl)-sn-glycero-3-phospho-(1'-sn-glycerol) + hexadecanoate + H(+)</text>
        <dbReference type="Rhea" id="RHEA:74103"/>
        <dbReference type="ChEBI" id="CHEBI:7896"/>
        <dbReference type="ChEBI" id="CHEBI:15377"/>
        <dbReference type="ChEBI" id="CHEBI:15378"/>
        <dbReference type="ChEBI" id="CHEBI:72841"/>
        <dbReference type="ChEBI" id="CHEBI:141490"/>
    </reaction>
    <physiologicalReaction direction="left-to-right" evidence="2">
        <dbReference type="Rhea" id="RHEA:74104"/>
    </physiologicalReaction>
</comment>
<comment type="subcellular location">
    <subcellularLocation>
        <location evidence="2">Secreted</location>
    </subcellularLocation>
    <subcellularLocation>
        <location evidence="6">Lysosome</location>
    </subcellularLocation>
    <subcellularLocation>
        <location evidence="2">Membrane</location>
        <topology evidence="2">Peripheral membrane protein</topology>
    </subcellularLocation>
</comment>
<comment type="PTM">
    <text evidence="2">N-glycosylated. N-glycosylation is important for maturation of the enzyme and normal subcellular location.</text>
</comment>
<comment type="similarity">
    <text evidence="5">Belongs to the AB hydrolase superfamily. Lipase family.</text>
</comment>